<organism>
    <name type="scientific">Shewanella sp. (strain ANA-3)</name>
    <dbReference type="NCBI Taxonomy" id="94122"/>
    <lineage>
        <taxon>Bacteria</taxon>
        <taxon>Pseudomonadati</taxon>
        <taxon>Pseudomonadota</taxon>
        <taxon>Gammaproteobacteria</taxon>
        <taxon>Alteromonadales</taxon>
        <taxon>Shewanellaceae</taxon>
        <taxon>Shewanella</taxon>
    </lineage>
</organism>
<name>ISCS_SHESA</name>
<reference key="1">
    <citation type="submission" date="2006-09" db="EMBL/GenBank/DDBJ databases">
        <title>Complete sequence of chromosome 1 of Shewanella sp. ANA-3.</title>
        <authorList>
            <person name="Copeland A."/>
            <person name="Lucas S."/>
            <person name="Lapidus A."/>
            <person name="Barry K."/>
            <person name="Detter J.C."/>
            <person name="Glavina del Rio T."/>
            <person name="Hammon N."/>
            <person name="Israni S."/>
            <person name="Dalin E."/>
            <person name="Tice H."/>
            <person name="Pitluck S."/>
            <person name="Chertkov O."/>
            <person name="Brettin T."/>
            <person name="Bruce D."/>
            <person name="Han C."/>
            <person name="Tapia R."/>
            <person name="Gilna P."/>
            <person name="Schmutz J."/>
            <person name="Larimer F."/>
            <person name="Land M."/>
            <person name="Hauser L."/>
            <person name="Kyrpides N."/>
            <person name="Kim E."/>
            <person name="Newman D."/>
            <person name="Salticov C."/>
            <person name="Konstantinidis K."/>
            <person name="Klappenback J."/>
            <person name="Tiedje J."/>
            <person name="Richardson P."/>
        </authorList>
    </citation>
    <scope>NUCLEOTIDE SEQUENCE [LARGE SCALE GENOMIC DNA]</scope>
    <source>
        <strain>ANA-3</strain>
    </source>
</reference>
<proteinExistence type="inferred from homology"/>
<comment type="function">
    <text evidence="1">Master enzyme that delivers sulfur to a number of partners involved in Fe-S cluster assembly, tRNA modification or cofactor biosynthesis. Catalyzes the removal of elemental sulfur atoms from cysteine to produce alanine. Functions as a sulfur delivery protein for Fe-S cluster synthesis onto IscU, an Fe-S scaffold assembly protein, as well as other S acceptor proteins.</text>
</comment>
<comment type="catalytic activity">
    <reaction evidence="1">
        <text>(sulfur carrier)-H + L-cysteine = (sulfur carrier)-SH + L-alanine</text>
        <dbReference type="Rhea" id="RHEA:43892"/>
        <dbReference type="Rhea" id="RHEA-COMP:14737"/>
        <dbReference type="Rhea" id="RHEA-COMP:14739"/>
        <dbReference type="ChEBI" id="CHEBI:29917"/>
        <dbReference type="ChEBI" id="CHEBI:35235"/>
        <dbReference type="ChEBI" id="CHEBI:57972"/>
        <dbReference type="ChEBI" id="CHEBI:64428"/>
        <dbReference type="EC" id="2.8.1.7"/>
    </reaction>
</comment>
<comment type="cofactor">
    <cofactor evidence="1">
        <name>pyridoxal 5'-phosphate</name>
        <dbReference type="ChEBI" id="CHEBI:597326"/>
    </cofactor>
</comment>
<comment type="pathway">
    <text evidence="1">Cofactor biosynthesis; iron-sulfur cluster biosynthesis.</text>
</comment>
<comment type="subunit">
    <text evidence="1">Homodimer. Forms a heterotetramer with IscU, interacts with other sulfur acceptors.</text>
</comment>
<comment type="subcellular location">
    <subcellularLocation>
        <location evidence="1">Cytoplasm</location>
    </subcellularLocation>
</comment>
<comment type="similarity">
    <text evidence="1">Belongs to the class-V pyridoxal-phosphate-dependent aminotransferase family. NifS/IscS subfamily.</text>
</comment>
<feature type="chain" id="PRO_1000019448" description="Cysteine desulfurase IscS">
    <location>
        <begin position="1"/>
        <end position="404"/>
    </location>
</feature>
<feature type="active site" description="Cysteine persulfide intermediate" evidence="1">
    <location>
        <position position="328"/>
    </location>
</feature>
<feature type="binding site" evidence="1">
    <location>
        <begin position="75"/>
        <end position="76"/>
    </location>
    <ligand>
        <name>pyridoxal 5'-phosphate</name>
        <dbReference type="ChEBI" id="CHEBI:597326"/>
    </ligand>
</feature>
<feature type="binding site" evidence="1">
    <location>
        <position position="155"/>
    </location>
    <ligand>
        <name>pyridoxal 5'-phosphate</name>
        <dbReference type="ChEBI" id="CHEBI:597326"/>
    </ligand>
</feature>
<feature type="binding site" evidence="1">
    <location>
        <position position="183"/>
    </location>
    <ligand>
        <name>pyridoxal 5'-phosphate</name>
        <dbReference type="ChEBI" id="CHEBI:597326"/>
    </ligand>
</feature>
<feature type="binding site" evidence="1">
    <location>
        <begin position="203"/>
        <end position="205"/>
    </location>
    <ligand>
        <name>pyridoxal 5'-phosphate</name>
        <dbReference type="ChEBI" id="CHEBI:597326"/>
    </ligand>
</feature>
<feature type="binding site" evidence="1">
    <location>
        <position position="243"/>
    </location>
    <ligand>
        <name>pyridoxal 5'-phosphate</name>
        <dbReference type="ChEBI" id="CHEBI:597326"/>
    </ligand>
</feature>
<feature type="binding site" description="via persulfide group" evidence="1">
    <location>
        <position position="328"/>
    </location>
    <ligand>
        <name>[2Fe-2S] cluster</name>
        <dbReference type="ChEBI" id="CHEBI:190135"/>
        <note>ligand shared with IscU</note>
    </ligand>
</feature>
<feature type="modified residue" description="N6-(pyridoxal phosphate)lysine" evidence="1">
    <location>
        <position position="206"/>
    </location>
</feature>
<accession>A0KXJ0</accession>
<sequence length="404" mass="44803">MKLPIYLDYAATTPVDPRVAEKMFQYMTMDGIFGNPASRSHRYGWQAEEAVDVARSQVADLINADHREIVFTSGATESNNLAIKGVAHFYNKKGKHIITSKTEHKAVLDTCRQLEREGFEVTYLEPEANGIIPMERLEAAMRDDTILVSIMHVNNEIGVIHDVDAIGELCRSKGIIFHMDAAQSAGKLPIDVQTTKVDLISISGHKMYGPKGIGALYVRRKPRIRLEAQMHGGGHERGMRSGTLATHQIVGLGEAAAIAKAEMATDNARIAKLRDKLWNGIKHIEETYVNGDMTHRVSGSLNVSFNYVEGESLMMALKDLAVSSGSACTSASLEPSYVLRALGLNDEMAHSSIRFSIGRFTTEEEIDHAIETITQSIDKLREMSPLWEMFKDGIDLNQVQWAHH</sequence>
<dbReference type="EC" id="2.8.1.7" evidence="1"/>
<dbReference type="EMBL" id="CP000469">
    <property type="protein sequence ID" value="ABK48509.1"/>
    <property type="molecule type" value="Genomic_DNA"/>
</dbReference>
<dbReference type="RefSeq" id="WP_011626051.1">
    <property type="nucleotide sequence ID" value="NC_008577.1"/>
</dbReference>
<dbReference type="SMR" id="A0KXJ0"/>
<dbReference type="STRING" id="94122.Shewana3_2280"/>
<dbReference type="KEGG" id="shn:Shewana3_2280"/>
<dbReference type="eggNOG" id="COG1104">
    <property type="taxonomic scope" value="Bacteria"/>
</dbReference>
<dbReference type="HOGENOM" id="CLU_003433_0_2_6"/>
<dbReference type="OrthoDB" id="9808002at2"/>
<dbReference type="UniPathway" id="UPA00266"/>
<dbReference type="Proteomes" id="UP000002589">
    <property type="component" value="Chromosome"/>
</dbReference>
<dbReference type="GO" id="GO:1990221">
    <property type="term" value="C:L-cysteine desulfurase complex"/>
    <property type="evidence" value="ECO:0007669"/>
    <property type="project" value="UniProtKB-ARBA"/>
</dbReference>
<dbReference type="GO" id="GO:0051537">
    <property type="term" value="F:2 iron, 2 sulfur cluster binding"/>
    <property type="evidence" value="ECO:0007669"/>
    <property type="project" value="UniProtKB-UniRule"/>
</dbReference>
<dbReference type="GO" id="GO:0031071">
    <property type="term" value="F:cysteine desulfurase activity"/>
    <property type="evidence" value="ECO:0007669"/>
    <property type="project" value="UniProtKB-UniRule"/>
</dbReference>
<dbReference type="GO" id="GO:0046872">
    <property type="term" value="F:metal ion binding"/>
    <property type="evidence" value="ECO:0007669"/>
    <property type="project" value="UniProtKB-KW"/>
</dbReference>
<dbReference type="GO" id="GO:0030170">
    <property type="term" value="F:pyridoxal phosphate binding"/>
    <property type="evidence" value="ECO:0007669"/>
    <property type="project" value="UniProtKB-UniRule"/>
</dbReference>
<dbReference type="GO" id="GO:0044571">
    <property type="term" value="P:[2Fe-2S] cluster assembly"/>
    <property type="evidence" value="ECO:0007669"/>
    <property type="project" value="UniProtKB-UniRule"/>
</dbReference>
<dbReference type="FunFam" id="3.40.640.10:FF:000003">
    <property type="entry name" value="Cysteine desulfurase IscS"/>
    <property type="match status" value="1"/>
</dbReference>
<dbReference type="FunFam" id="3.90.1150.10:FF:000002">
    <property type="entry name" value="Cysteine desulfurase IscS"/>
    <property type="match status" value="1"/>
</dbReference>
<dbReference type="Gene3D" id="3.90.1150.10">
    <property type="entry name" value="Aspartate Aminotransferase, domain 1"/>
    <property type="match status" value="1"/>
</dbReference>
<dbReference type="Gene3D" id="3.40.640.10">
    <property type="entry name" value="Type I PLP-dependent aspartate aminotransferase-like (Major domain)"/>
    <property type="match status" value="1"/>
</dbReference>
<dbReference type="HAMAP" id="MF_00331">
    <property type="entry name" value="Cys_desulf_IscS"/>
    <property type="match status" value="1"/>
</dbReference>
<dbReference type="InterPro" id="IPR000192">
    <property type="entry name" value="Aminotrans_V_dom"/>
</dbReference>
<dbReference type="InterPro" id="IPR020578">
    <property type="entry name" value="Aminotrans_V_PyrdxlP_BS"/>
</dbReference>
<dbReference type="InterPro" id="IPR010240">
    <property type="entry name" value="Cys_deSase_IscS"/>
</dbReference>
<dbReference type="InterPro" id="IPR016454">
    <property type="entry name" value="Cysteine_dSase"/>
</dbReference>
<dbReference type="InterPro" id="IPR015424">
    <property type="entry name" value="PyrdxlP-dep_Trfase"/>
</dbReference>
<dbReference type="InterPro" id="IPR015421">
    <property type="entry name" value="PyrdxlP-dep_Trfase_major"/>
</dbReference>
<dbReference type="InterPro" id="IPR015422">
    <property type="entry name" value="PyrdxlP-dep_Trfase_small"/>
</dbReference>
<dbReference type="NCBIfam" id="TIGR02006">
    <property type="entry name" value="IscS"/>
    <property type="match status" value="1"/>
</dbReference>
<dbReference type="NCBIfam" id="NF002806">
    <property type="entry name" value="PRK02948.1"/>
    <property type="match status" value="1"/>
</dbReference>
<dbReference type="NCBIfam" id="NF010611">
    <property type="entry name" value="PRK14012.1"/>
    <property type="match status" value="1"/>
</dbReference>
<dbReference type="PANTHER" id="PTHR11601:SF34">
    <property type="entry name" value="CYSTEINE DESULFURASE"/>
    <property type="match status" value="1"/>
</dbReference>
<dbReference type="PANTHER" id="PTHR11601">
    <property type="entry name" value="CYSTEINE DESULFURYLASE FAMILY MEMBER"/>
    <property type="match status" value="1"/>
</dbReference>
<dbReference type="Pfam" id="PF00266">
    <property type="entry name" value="Aminotran_5"/>
    <property type="match status" value="1"/>
</dbReference>
<dbReference type="PIRSF" id="PIRSF005572">
    <property type="entry name" value="NifS"/>
    <property type="match status" value="1"/>
</dbReference>
<dbReference type="SUPFAM" id="SSF53383">
    <property type="entry name" value="PLP-dependent transferases"/>
    <property type="match status" value="1"/>
</dbReference>
<dbReference type="PROSITE" id="PS00595">
    <property type="entry name" value="AA_TRANSFER_CLASS_5"/>
    <property type="match status" value="1"/>
</dbReference>
<evidence type="ECO:0000255" key="1">
    <source>
        <dbReference type="HAMAP-Rule" id="MF_00331"/>
    </source>
</evidence>
<protein>
    <recommendedName>
        <fullName evidence="1">Cysteine desulfurase IscS</fullName>
        <ecNumber evidence="1">2.8.1.7</ecNumber>
    </recommendedName>
</protein>
<gene>
    <name evidence="1" type="primary">iscS</name>
    <name type="ordered locus">Shewana3_2280</name>
</gene>
<keyword id="KW-0001">2Fe-2S</keyword>
<keyword id="KW-0963">Cytoplasm</keyword>
<keyword id="KW-0408">Iron</keyword>
<keyword id="KW-0411">Iron-sulfur</keyword>
<keyword id="KW-0479">Metal-binding</keyword>
<keyword id="KW-0663">Pyridoxal phosphate</keyword>
<keyword id="KW-0808">Transferase</keyword>